<feature type="chain" id="PRO_0000358872" description="Tyrosine aminotransferase">
    <location>
        <begin position="1"/>
        <end position="397"/>
    </location>
</feature>
<feature type="binding site" evidence="1">
    <location>
        <position position="34"/>
    </location>
    <ligand>
        <name>substrate</name>
    </ligand>
</feature>
<feature type="binding site" evidence="1">
    <location>
        <position position="66"/>
    </location>
    <ligand>
        <name>substrate</name>
    </ligand>
</feature>
<feature type="binding site" evidence="1">
    <location>
        <position position="131"/>
    </location>
    <ligand>
        <name>substrate</name>
    </ligand>
</feature>
<feature type="binding site" evidence="1">
    <location>
        <position position="184"/>
    </location>
    <ligand>
        <name>substrate</name>
    </ligand>
</feature>
<feature type="binding site" evidence="1">
    <location>
        <position position="375"/>
    </location>
    <ligand>
        <name>substrate</name>
    </ligand>
</feature>
<feature type="modified residue" description="N6-(pyridoxal phosphate)lysine" evidence="1">
    <location>
        <position position="247"/>
    </location>
</feature>
<name>TYRB_KLEPN</name>
<comment type="function">
    <text>catalyzes the formation of methionine from 2-keto-4-methylthiobutyrate (KMTB) primarily using aromatic amino acids (tyrosine, phenylalanine and tryptophan) or glutamate as the amino donors. Histidine, leucine, asparagine, or arginine are also functional amino donors but to a lesser extent. Can also use alpha-ketoglutarate, oxaloacetate and pyruvate as the amino acceptors.</text>
</comment>
<comment type="catalytic activity">
    <reaction>
        <text>L-tyrosine + 2-oxoglutarate = 3-(4-hydroxyphenyl)pyruvate + L-glutamate</text>
        <dbReference type="Rhea" id="RHEA:15093"/>
        <dbReference type="ChEBI" id="CHEBI:16810"/>
        <dbReference type="ChEBI" id="CHEBI:29985"/>
        <dbReference type="ChEBI" id="CHEBI:36242"/>
        <dbReference type="ChEBI" id="CHEBI:58315"/>
        <dbReference type="EC" id="2.6.1.5"/>
    </reaction>
</comment>
<comment type="catalytic activity">
    <reaction>
        <text>L-tyrosine + 2-oxoglutarate = 3-(4-hydroxyphenyl)pyruvate + L-glutamate</text>
        <dbReference type="Rhea" id="RHEA:15093"/>
        <dbReference type="ChEBI" id="CHEBI:16810"/>
        <dbReference type="ChEBI" id="CHEBI:29985"/>
        <dbReference type="ChEBI" id="CHEBI:36242"/>
        <dbReference type="ChEBI" id="CHEBI:58315"/>
        <dbReference type="EC" id="2.6.1.57"/>
    </reaction>
</comment>
<comment type="catalytic activity">
    <reaction>
        <text>4-methylsulfanyl-2-oxobutanoate + L-tyrosine = 3-(4-hydroxyphenyl)pyruvate + L-methionine</text>
        <dbReference type="Rhea" id="RHEA:47084"/>
        <dbReference type="ChEBI" id="CHEBI:16723"/>
        <dbReference type="ChEBI" id="CHEBI:36242"/>
        <dbReference type="ChEBI" id="CHEBI:57844"/>
        <dbReference type="ChEBI" id="CHEBI:58315"/>
    </reaction>
</comment>
<comment type="catalytic activity">
    <reaction>
        <text>an aromatic L-alpha-amino acid + 2-oxoglutarate = an aromatic oxo-acid + L-glutamate</text>
        <dbReference type="Rhea" id="RHEA:17533"/>
        <dbReference type="ChEBI" id="CHEBI:16810"/>
        <dbReference type="ChEBI" id="CHEBI:29985"/>
        <dbReference type="ChEBI" id="CHEBI:73309"/>
        <dbReference type="ChEBI" id="CHEBI:84824"/>
        <dbReference type="EC" id="2.6.1.57"/>
    </reaction>
</comment>
<comment type="catalytic activity">
    <reaction>
        <text>L-aspartate + 2-oxoglutarate = oxaloacetate + L-glutamate</text>
        <dbReference type="Rhea" id="RHEA:21824"/>
        <dbReference type="ChEBI" id="CHEBI:16452"/>
        <dbReference type="ChEBI" id="CHEBI:16810"/>
        <dbReference type="ChEBI" id="CHEBI:29985"/>
        <dbReference type="ChEBI" id="CHEBI:29991"/>
        <dbReference type="EC" id="2.6.1.1"/>
    </reaction>
</comment>
<comment type="cofactor">
    <cofactor evidence="3">
        <name>pyridoxal 5'-phosphate</name>
        <dbReference type="ChEBI" id="CHEBI:597326"/>
    </cofactor>
</comment>
<comment type="activity regulation">
    <text evidence="2">Inhibited by malate and nitrotyrosine by approximately 20% at the higher concentration. At 100 uM, canaline and carboxymethoxylamine inhibit aminotransferase activity by 35 and 70%, respectively. Addition of 1.0 mM carboxymethoxylamine lead to a complete inhibition of the aminotransferase activity.</text>
</comment>
<comment type="biophysicochemical properties">
    <kinetics>
        <KM evidence="2">1.42 mM for tryptophan (at pH 7.4 and 10 mM KMTB)</KM>
        <KM evidence="2">2.01 mM for tyrosine (at pH 7.4 and 10 mM KMTB)</KM>
        <KM evidence="2">2.01 mM for phenylalanine (at pH 7.4 and 10 mM KMTB)</KM>
        <KM evidence="2">2.46 mM for KMTB (at pH 7.4 and 5 mM tyrosine)</KM>
        <KM evidence="2">3 mM for alpha-ketoglutarate (at pH 7.4 and 5 mM tyrosine)</KM>
        <KM evidence="2">6 mM for oxaloacetate (at pH 7.4 and 5 mM tyrosine)</KM>
        <KM evidence="2">11.93 mM for glutamate (at pH 7.4 and 10 mM KMTB)</KM>
        <KM evidence="2">20.13 mM for pyruvate (at pH 7.4 and 5 mM tyrosine)</KM>
        <Vmax evidence="2">0.09 umol/min/mg enzyme with pyruvate and tyrosine as substrates(at pH 7.4)</Vmax>
        <Vmax evidence="2">1.8 umol/min/mg enzyme with phenylalanine and KMTB as substrates (at pH 7.4)</Vmax>
        <Vmax evidence="2">2.63 umol/min/mg enzyme with tryptophan and KMTB as substrates(at pH 7.4)</Vmax>
        <Vmax evidence="2">3.25 umol/min/mg enzyme with tyrosine and KMTB as substrates(at pH 7.4)</Vmax>
        <Vmax evidence="2">3.29 umol/min/mg enzyme with phenylalanine and tyrosine as substrates(at pH 7.4)</Vmax>
        <Vmax evidence="2">5.21 umol/min/mg enzyme with alpha-ketoglutarate and tyrosine as substrates(at pH 7.4)</Vmax>
        <Vmax evidence="2">7.39 umol/min/mg enzyme with oxaloacetate and tyrosine as substrates(at pH 7.4)</Vmax>
        <Vmax evidence="2">7.65 umol/min/mg enzyme with glutamate and KMTB as substrates (at pH 7.4)</Vmax>
    </kinetics>
</comment>
<comment type="pathway">
    <text>Amino-acid biosynthesis; L-methionine biosynthesis via salvage pathway; L-methionine from S-methyl-5-thio-alpha-D-ribose 1-phosphate: step 6/6.</text>
</comment>
<comment type="subunit">
    <text evidence="2">Homodimer.</text>
</comment>
<comment type="similarity">
    <text evidence="3">Belongs to the class-I pyridoxal-phosphate-dependent aminotransferase family.</text>
</comment>
<evidence type="ECO:0000250" key="1"/>
<evidence type="ECO:0000269" key="2">
    <source>
    </source>
</evidence>
<evidence type="ECO:0000305" key="3"/>
<keyword id="KW-0032">Aminotransferase</keyword>
<keyword id="KW-0903">Direct protein sequencing</keyword>
<keyword id="KW-0663">Pyridoxal phosphate</keyword>
<keyword id="KW-0808">Transferase</keyword>
<gene>
    <name type="primary">tyrB</name>
</gene>
<sequence length="397" mass="43432">MFQKVDAYAGDPILSLMERFKEDPRSDKVNLSIGLYYNDDGIIPQLQAVAEAEARLNAEPHGASLYLPMEGFSGYRQAIAPLLFGAEHTALKQNRIASIQTVGGSGALKVGADFLKRYFPESHVWVSDPTWENHIAIFEGAGFEVSTYPWFDKATNGVRFENLLAMLQTLPARDIVLLHPCCHNPTGADLTPAQWDRVVEVLKARQLIPFLDIAYQGFGGGLEEDAYAIRAIASAGMPMLVSNSFSKIFSLYGERVGGLSVVCEDSETAGRVLGQLKATVRRNYSSPPSFGAQVVATVLNDAALKATWQAEVDAMRAHILTMRQALVDALQQVAPGSKVDYLLKQRGMFSYTGFSAAQVDRLRDEFGVYLIASGRMRVAGLNSRNVQQVAKAFVAVM</sequence>
<proteinExistence type="evidence at protein level"/>
<organism>
    <name type="scientific">Klebsiella pneumoniae</name>
    <dbReference type="NCBI Taxonomy" id="573"/>
    <lineage>
        <taxon>Bacteria</taxon>
        <taxon>Pseudomonadati</taxon>
        <taxon>Pseudomonadota</taxon>
        <taxon>Gammaproteobacteria</taxon>
        <taxon>Enterobacterales</taxon>
        <taxon>Enterobacteriaceae</taxon>
        <taxon>Klebsiella/Raoultella group</taxon>
        <taxon>Klebsiella</taxon>
        <taxon>Klebsiella pneumoniae complex</taxon>
    </lineage>
</organism>
<reference key="1">
    <citation type="journal article" date="1999" name="J. Bacteriol.">
        <title>Tyrosine aminotransferase catalyzes the final step of methionine recycling in Klebsiella pneumoniae.</title>
        <authorList>
            <person name="Heilbronn J."/>
            <person name="Wilson J."/>
            <person name="Berger B.J."/>
        </authorList>
    </citation>
    <scope>NUCLEOTIDE SEQUENCE [GENOMIC DNA]</scope>
    <scope>PROTEIN SEQUENCE OF 1-22</scope>
    <scope>BIOPHYSICOCHEMICAL PROPERTIES</scope>
    <scope>ACTIVITY REGULATION</scope>
    <scope>SUBUNIT</scope>
    <source>
        <strain>ATCC 13883 / DSM 30104 / JCM 1662 / NBRC 14940 / NCIMB 13281 / NCTC 9633</strain>
    </source>
</reference>
<dbReference type="EC" id="2.6.1.5"/>
<dbReference type="EC" id="2.6.1.57"/>
<dbReference type="EC" id="2.6.1.1"/>
<dbReference type="EMBL" id="AF074934">
    <property type="protein sequence ID" value="AAC26140.1"/>
    <property type="molecule type" value="Genomic_DNA"/>
</dbReference>
<dbReference type="SMR" id="O85746"/>
<dbReference type="KEGG" id="ag:AAC26140"/>
<dbReference type="BioCyc" id="MetaCyc:MONOMER-1302"/>
<dbReference type="SABIO-RK" id="O85746"/>
<dbReference type="UniPathway" id="UPA00904">
    <property type="reaction ID" value="UER00879"/>
</dbReference>
<dbReference type="GO" id="GO:0005829">
    <property type="term" value="C:cytosol"/>
    <property type="evidence" value="ECO:0007669"/>
    <property type="project" value="TreeGrafter"/>
</dbReference>
<dbReference type="GO" id="GO:0042802">
    <property type="term" value="F:identical protein binding"/>
    <property type="evidence" value="ECO:0007669"/>
    <property type="project" value="TreeGrafter"/>
</dbReference>
<dbReference type="GO" id="GO:0004069">
    <property type="term" value="F:L-aspartate:2-oxoglutarate aminotransferase activity"/>
    <property type="evidence" value="ECO:0007669"/>
    <property type="project" value="UniProtKB-EC"/>
</dbReference>
<dbReference type="GO" id="GO:0004838">
    <property type="term" value="F:L-tyrosine-2-oxoglutarate transaminase activity"/>
    <property type="evidence" value="ECO:0007669"/>
    <property type="project" value="RHEA"/>
</dbReference>
<dbReference type="GO" id="GO:0030170">
    <property type="term" value="F:pyridoxal phosphate binding"/>
    <property type="evidence" value="ECO:0007669"/>
    <property type="project" value="InterPro"/>
</dbReference>
<dbReference type="GO" id="GO:0019509">
    <property type="term" value="P:L-methionine salvage from methylthioadenosine"/>
    <property type="evidence" value="ECO:0000314"/>
    <property type="project" value="CACAO"/>
</dbReference>
<dbReference type="GO" id="GO:0033585">
    <property type="term" value="P:L-phenylalanine biosynthetic process from chorismate via phenylpyruvate"/>
    <property type="evidence" value="ECO:0007669"/>
    <property type="project" value="TreeGrafter"/>
</dbReference>
<dbReference type="CDD" id="cd00609">
    <property type="entry name" value="AAT_like"/>
    <property type="match status" value="1"/>
</dbReference>
<dbReference type="FunFam" id="3.40.640.10:FF:000015">
    <property type="entry name" value="Aspartate aminotransferase"/>
    <property type="match status" value="1"/>
</dbReference>
<dbReference type="FunFam" id="3.90.1150.10:FF:000001">
    <property type="entry name" value="Aspartate aminotransferase"/>
    <property type="match status" value="1"/>
</dbReference>
<dbReference type="Gene3D" id="3.90.1150.10">
    <property type="entry name" value="Aspartate Aminotransferase, domain 1"/>
    <property type="match status" value="1"/>
</dbReference>
<dbReference type="Gene3D" id="3.40.640.10">
    <property type="entry name" value="Type I PLP-dependent aspartate aminotransferase-like (Major domain)"/>
    <property type="match status" value="1"/>
</dbReference>
<dbReference type="InterPro" id="IPR004839">
    <property type="entry name" value="Aminotransferase_I/II_large"/>
</dbReference>
<dbReference type="InterPro" id="IPR000796">
    <property type="entry name" value="Asp_trans"/>
</dbReference>
<dbReference type="InterPro" id="IPR004838">
    <property type="entry name" value="NHTrfase_class1_PyrdxlP-BS"/>
</dbReference>
<dbReference type="InterPro" id="IPR015424">
    <property type="entry name" value="PyrdxlP-dep_Trfase"/>
</dbReference>
<dbReference type="InterPro" id="IPR015421">
    <property type="entry name" value="PyrdxlP-dep_Trfase_major"/>
</dbReference>
<dbReference type="InterPro" id="IPR015422">
    <property type="entry name" value="PyrdxlP-dep_Trfase_small"/>
</dbReference>
<dbReference type="NCBIfam" id="NF006719">
    <property type="entry name" value="PRK09257.1"/>
    <property type="match status" value="1"/>
</dbReference>
<dbReference type="PANTHER" id="PTHR11879:SF37">
    <property type="entry name" value="AROMATIC-AMINO-ACID AMINOTRANSFERASE"/>
    <property type="match status" value="1"/>
</dbReference>
<dbReference type="PANTHER" id="PTHR11879">
    <property type="entry name" value="ASPARTATE AMINOTRANSFERASE"/>
    <property type="match status" value="1"/>
</dbReference>
<dbReference type="Pfam" id="PF00155">
    <property type="entry name" value="Aminotran_1_2"/>
    <property type="match status" value="1"/>
</dbReference>
<dbReference type="PRINTS" id="PR00799">
    <property type="entry name" value="TRANSAMINASE"/>
</dbReference>
<dbReference type="SUPFAM" id="SSF53383">
    <property type="entry name" value="PLP-dependent transferases"/>
    <property type="match status" value="1"/>
</dbReference>
<dbReference type="PROSITE" id="PS00105">
    <property type="entry name" value="AA_TRANSFER_CLASS_1"/>
    <property type="match status" value="1"/>
</dbReference>
<protein>
    <recommendedName>
        <fullName>Tyrosine aminotransferase</fullName>
        <shortName>TyrAT</shortName>
        <ecNumber>2.6.1.5</ecNumber>
    </recommendedName>
    <alternativeName>
        <fullName>Aromatic-amino-acid transaminase</fullName>
        <ecNumber>2.6.1.57</ecNumber>
    </alternativeName>
    <alternativeName>
        <fullName>Aspartate aminotransferase</fullName>
        <ecNumber>2.6.1.1</ecNumber>
    </alternativeName>
</protein>
<accession>O85746</accession>